<sequence length="369" mass="43037">MASSKCLLLPSLPFELIEEILYKIPAESLIRFKSTCKKWYNLITEKRFMYNHLDHYSPERFIRTYDQQIIDPVTEILSDALIPDEFRDLYPIYSMVHCDGLMLCTCRKWDNSLAVWNPVLREIKWIKPSVCYLHTDYVGIGYDDNVSRDNYKILKLLGRLPKDDDSDPNCEIYEFKSDSWKTLVAKFDWDIDIRCNNGVSVKGKMYWIAKKKEDFTIIRFDFSTETFKEICVCPYTLVTRLGCFDGDRLSLLLQGEESQGIEVWMTNKLSDKVVSFSQYFNVTTPDLPALHLQSCMACPGYSIGKRRNIRVWCEGSVDVDDKSYVIITFYEIDEGGVIKQIETASYGQFEYDDPFICCYVYVPSLIPIQ</sequence>
<reference key="1">
    <citation type="journal article" date="2000" name="Nature">
        <title>Sequence and analysis of chromosome 3 of the plant Arabidopsis thaliana.</title>
        <authorList>
            <person name="Salanoubat M."/>
            <person name="Lemcke K."/>
            <person name="Rieger M."/>
            <person name="Ansorge W."/>
            <person name="Unseld M."/>
            <person name="Fartmann B."/>
            <person name="Valle G."/>
            <person name="Bloecker H."/>
            <person name="Perez-Alonso M."/>
            <person name="Obermaier B."/>
            <person name="Delseny M."/>
            <person name="Boutry M."/>
            <person name="Grivell L.A."/>
            <person name="Mache R."/>
            <person name="Puigdomenech P."/>
            <person name="De Simone V."/>
            <person name="Choisne N."/>
            <person name="Artiguenave F."/>
            <person name="Robert C."/>
            <person name="Brottier P."/>
            <person name="Wincker P."/>
            <person name="Cattolico L."/>
            <person name="Weissenbach J."/>
            <person name="Saurin W."/>
            <person name="Quetier F."/>
            <person name="Schaefer M."/>
            <person name="Mueller-Auer S."/>
            <person name="Gabel C."/>
            <person name="Fuchs M."/>
            <person name="Benes V."/>
            <person name="Wurmbach E."/>
            <person name="Drzonek H."/>
            <person name="Erfle H."/>
            <person name="Jordan N."/>
            <person name="Bangert S."/>
            <person name="Wiedelmann R."/>
            <person name="Kranz H."/>
            <person name="Voss H."/>
            <person name="Holland R."/>
            <person name="Brandt P."/>
            <person name="Nyakatura G."/>
            <person name="Vezzi A."/>
            <person name="D'Angelo M."/>
            <person name="Pallavicini A."/>
            <person name="Toppo S."/>
            <person name="Simionati B."/>
            <person name="Conrad A."/>
            <person name="Hornischer K."/>
            <person name="Kauer G."/>
            <person name="Loehnert T.-H."/>
            <person name="Nordsiek G."/>
            <person name="Reichelt J."/>
            <person name="Scharfe M."/>
            <person name="Schoen O."/>
            <person name="Bargues M."/>
            <person name="Terol J."/>
            <person name="Climent J."/>
            <person name="Navarro P."/>
            <person name="Collado C."/>
            <person name="Perez-Perez A."/>
            <person name="Ottenwaelder B."/>
            <person name="Duchemin D."/>
            <person name="Cooke R."/>
            <person name="Laudie M."/>
            <person name="Berger-Llauro C."/>
            <person name="Purnelle B."/>
            <person name="Masuy D."/>
            <person name="de Haan M."/>
            <person name="Maarse A.C."/>
            <person name="Alcaraz J.-P."/>
            <person name="Cottet A."/>
            <person name="Casacuberta E."/>
            <person name="Monfort A."/>
            <person name="Argiriou A."/>
            <person name="Flores M."/>
            <person name="Liguori R."/>
            <person name="Vitale D."/>
            <person name="Mannhaupt G."/>
            <person name="Haase D."/>
            <person name="Schoof H."/>
            <person name="Rudd S."/>
            <person name="Zaccaria P."/>
            <person name="Mewes H.-W."/>
            <person name="Mayer K.F.X."/>
            <person name="Kaul S."/>
            <person name="Town C.D."/>
            <person name="Koo H.L."/>
            <person name="Tallon L.J."/>
            <person name="Jenkins J."/>
            <person name="Rooney T."/>
            <person name="Rizzo M."/>
            <person name="Walts A."/>
            <person name="Utterback T."/>
            <person name="Fujii C.Y."/>
            <person name="Shea T.P."/>
            <person name="Creasy T.H."/>
            <person name="Haas B."/>
            <person name="Maiti R."/>
            <person name="Wu D."/>
            <person name="Peterson J."/>
            <person name="Van Aken S."/>
            <person name="Pai G."/>
            <person name="Militscher J."/>
            <person name="Sellers P."/>
            <person name="Gill J.E."/>
            <person name="Feldblyum T.V."/>
            <person name="Preuss D."/>
            <person name="Lin X."/>
            <person name="Nierman W.C."/>
            <person name="Salzberg S.L."/>
            <person name="White O."/>
            <person name="Venter J.C."/>
            <person name="Fraser C.M."/>
            <person name="Kaneko T."/>
            <person name="Nakamura Y."/>
            <person name="Sato S."/>
            <person name="Kato T."/>
            <person name="Asamizu E."/>
            <person name="Sasamoto S."/>
            <person name="Kimura T."/>
            <person name="Idesawa K."/>
            <person name="Kawashima K."/>
            <person name="Kishida Y."/>
            <person name="Kiyokawa C."/>
            <person name="Kohara M."/>
            <person name="Matsumoto M."/>
            <person name="Matsuno A."/>
            <person name="Muraki A."/>
            <person name="Nakayama S."/>
            <person name="Nakazaki N."/>
            <person name="Shinpo S."/>
            <person name="Takeuchi C."/>
            <person name="Wada T."/>
            <person name="Watanabe A."/>
            <person name="Yamada M."/>
            <person name="Yasuda M."/>
            <person name="Tabata S."/>
        </authorList>
    </citation>
    <scope>NUCLEOTIDE SEQUENCE [LARGE SCALE GENOMIC DNA]</scope>
    <source>
        <strain>cv. Columbia</strain>
    </source>
</reference>
<reference key="2">
    <citation type="journal article" date="2017" name="Plant J.">
        <title>Araport11: a complete reannotation of the Arabidopsis thaliana reference genome.</title>
        <authorList>
            <person name="Cheng C.Y."/>
            <person name="Krishnakumar V."/>
            <person name="Chan A.P."/>
            <person name="Thibaud-Nissen F."/>
            <person name="Schobel S."/>
            <person name="Town C.D."/>
        </authorList>
    </citation>
    <scope>GENOME REANNOTATION</scope>
    <source>
        <strain>cv. Columbia</strain>
    </source>
</reference>
<reference key="3">
    <citation type="submission" date="2005-05" db="EMBL/GenBank/DDBJ databases">
        <authorList>
            <person name="Underwood B.A."/>
            <person name="Xiao Y.-L."/>
            <person name="Moskal W.A. Jr."/>
            <person name="Monaghan E.L."/>
            <person name="Wang W."/>
            <person name="Redman J.C."/>
            <person name="Wu H.C."/>
            <person name="Utterback T."/>
            <person name="Town C.D."/>
        </authorList>
    </citation>
    <scope>NUCLEOTIDE SEQUENCE [LARGE SCALE MRNA]</scope>
    <source>
        <strain>cv. Columbia</strain>
    </source>
</reference>
<organism>
    <name type="scientific">Arabidopsis thaliana</name>
    <name type="common">Mouse-ear cress</name>
    <dbReference type="NCBI Taxonomy" id="3702"/>
    <lineage>
        <taxon>Eukaryota</taxon>
        <taxon>Viridiplantae</taxon>
        <taxon>Streptophyta</taxon>
        <taxon>Embryophyta</taxon>
        <taxon>Tracheophyta</taxon>
        <taxon>Spermatophyta</taxon>
        <taxon>Magnoliopsida</taxon>
        <taxon>eudicotyledons</taxon>
        <taxon>Gunneridae</taxon>
        <taxon>Pentapetalae</taxon>
        <taxon>rosids</taxon>
        <taxon>malvids</taxon>
        <taxon>Brassicales</taxon>
        <taxon>Brassicaceae</taxon>
        <taxon>Camelineae</taxon>
        <taxon>Arabidopsis</taxon>
    </lineage>
</organism>
<feature type="chain" id="PRO_0000283407" description="F-box protein At3g08750">
    <location>
        <begin position="1"/>
        <end position="369"/>
    </location>
</feature>
<feature type="domain" description="F-box" evidence="1">
    <location>
        <begin position="6"/>
        <end position="53"/>
    </location>
</feature>
<accession>Q9C9Y4</accession>
<protein>
    <recommendedName>
        <fullName>F-box protein At3g08750</fullName>
    </recommendedName>
</protein>
<proteinExistence type="evidence at transcript level"/>
<gene>
    <name type="ordered locus">At3g08750</name>
    <name type="ORF">F17O14.22</name>
</gene>
<dbReference type="EMBL" id="AC012562">
    <property type="protein sequence ID" value="AAG51357.1"/>
    <property type="molecule type" value="Genomic_DNA"/>
</dbReference>
<dbReference type="EMBL" id="CP002686">
    <property type="protein sequence ID" value="AEE74673.1"/>
    <property type="molecule type" value="Genomic_DNA"/>
</dbReference>
<dbReference type="EMBL" id="DQ056588">
    <property type="protein sequence ID" value="AAY78736.1"/>
    <property type="molecule type" value="mRNA"/>
</dbReference>
<dbReference type="RefSeq" id="NP_187487.1">
    <property type="nucleotide sequence ID" value="NM_111709.1"/>
</dbReference>
<dbReference type="SMR" id="Q9C9Y4"/>
<dbReference type="BioGRID" id="5357">
    <property type="interactions" value="2"/>
</dbReference>
<dbReference type="FunCoup" id="Q9C9Y4">
    <property type="interactions" value="2"/>
</dbReference>
<dbReference type="STRING" id="3702.Q9C9Y4"/>
<dbReference type="PaxDb" id="3702-AT3G08750.1"/>
<dbReference type="EnsemblPlants" id="AT3G08750.1">
    <property type="protein sequence ID" value="AT3G08750.1"/>
    <property type="gene ID" value="AT3G08750"/>
</dbReference>
<dbReference type="GeneID" id="820022"/>
<dbReference type="Gramene" id="AT3G08750.1">
    <property type="protein sequence ID" value="AT3G08750.1"/>
    <property type="gene ID" value="AT3G08750"/>
</dbReference>
<dbReference type="KEGG" id="ath:AT3G08750"/>
<dbReference type="Araport" id="AT3G08750"/>
<dbReference type="TAIR" id="AT3G08750"/>
<dbReference type="HOGENOM" id="CLU_034692_2_0_1"/>
<dbReference type="InParanoid" id="Q9C9Y4"/>
<dbReference type="OMA" id="KWHALIT"/>
<dbReference type="PhylomeDB" id="Q9C9Y4"/>
<dbReference type="PRO" id="PR:Q9C9Y4"/>
<dbReference type="Proteomes" id="UP000006548">
    <property type="component" value="Chromosome 3"/>
</dbReference>
<dbReference type="ExpressionAtlas" id="Q9C9Y4">
    <property type="expression patterns" value="baseline and differential"/>
</dbReference>
<dbReference type="CDD" id="cd22157">
    <property type="entry name" value="F-box_AtFBW1-like"/>
    <property type="match status" value="1"/>
</dbReference>
<dbReference type="Gene3D" id="1.20.1280.50">
    <property type="match status" value="1"/>
</dbReference>
<dbReference type="InterPro" id="IPR006527">
    <property type="entry name" value="F-box-assoc_dom_typ1"/>
</dbReference>
<dbReference type="InterPro" id="IPR017451">
    <property type="entry name" value="F-box-assoc_interact_dom"/>
</dbReference>
<dbReference type="InterPro" id="IPR036047">
    <property type="entry name" value="F-box-like_dom_sf"/>
</dbReference>
<dbReference type="InterPro" id="IPR001810">
    <property type="entry name" value="F-box_dom"/>
</dbReference>
<dbReference type="InterPro" id="IPR011043">
    <property type="entry name" value="Gal_Oxase/kelch_b-propeller"/>
</dbReference>
<dbReference type="InterPro" id="IPR050796">
    <property type="entry name" value="SCF_F-box_component"/>
</dbReference>
<dbReference type="NCBIfam" id="TIGR01640">
    <property type="entry name" value="F_box_assoc_1"/>
    <property type="match status" value="1"/>
</dbReference>
<dbReference type="PANTHER" id="PTHR31672">
    <property type="entry name" value="BNACNNG10540D PROTEIN"/>
    <property type="match status" value="1"/>
</dbReference>
<dbReference type="PANTHER" id="PTHR31672:SF13">
    <property type="entry name" value="F-BOX PROTEIN CPR30-LIKE"/>
    <property type="match status" value="1"/>
</dbReference>
<dbReference type="Pfam" id="PF00646">
    <property type="entry name" value="F-box"/>
    <property type="match status" value="1"/>
</dbReference>
<dbReference type="Pfam" id="PF07734">
    <property type="entry name" value="FBA_1"/>
    <property type="match status" value="1"/>
</dbReference>
<dbReference type="SMART" id="SM00256">
    <property type="entry name" value="FBOX"/>
    <property type="match status" value="1"/>
</dbReference>
<dbReference type="SUPFAM" id="SSF81383">
    <property type="entry name" value="F-box domain"/>
    <property type="match status" value="1"/>
</dbReference>
<dbReference type="SUPFAM" id="SSF50965">
    <property type="entry name" value="Galactose oxidase, central domain"/>
    <property type="match status" value="1"/>
</dbReference>
<dbReference type="PROSITE" id="PS50181">
    <property type="entry name" value="FBOX"/>
    <property type="match status" value="1"/>
</dbReference>
<name>FB136_ARATH</name>
<evidence type="ECO:0000255" key="1">
    <source>
        <dbReference type="PROSITE-ProRule" id="PRU00080"/>
    </source>
</evidence>
<keyword id="KW-1185">Reference proteome</keyword>